<name>RL17_SHIFL</name>
<sequence length="127" mass="14365">MRHRKSGRQLNRNSSHRQAMFRNMAGSLVRHEIIKTTLPKAKELRRVVEPLITLAKTDSVANRRLAFARTRDNEIVAKLFNELGPRFASRAGGYTRILKCGFRAGDNAPMAYIELVDRSEKAEAAAE</sequence>
<dbReference type="EMBL" id="AE005674">
    <property type="protein sequence ID" value="AAN44789.1"/>
    <property type="molecule type" value="Genomic_DNA"/>
</dbReference>
<dbReference type="EMBL" id="AE014073">
    <property type="protein sequence ID" value="AAP19387.1"/>
    <property type="molecule type" value="Genomic_DNA"/>
</dbReference>
<dbReference type="RefSeq" id="NP_709082.1">
    <property type="nucleotide sequence ID" value="NC_004337.2"/>
</dbReference>
<dbReference type="RefSeq" id="WP_001216368.1">
    <property type="nucleotide sequence ID" value="NZ_WPGW01000088.1"/>
</dbReference>
<dbReference type="SMR" id="P0AG47"/>
<dbReference type="STRING" id="198214.SF3326"/>
<dbReference type="PaxDb" id="198214-SF3326"/>
<dbReference type="GeneID" id="1027046"/>
<dbReference type="GeneID" id="97442834"/>
<dbReference type="KEGG" id="sfl:SF3326"/>
<dbReference type="KEGG" id="sfx:S4436"/>
<dbReference type="PATRIC" id="fig|198214.7.peg.3935"/>
<dbReference type="HOGENOM" id="CLU_074407_2_0_6"/>
<dbReference type="Proteomes" id="UP000001006">
    <property type="component" value="Chromosome"/>
</dbReference>
<dbReference type="Proteomes" id="UP000002673">
    <property type="component" value="Chromosome"/>
</dbReference>
<dbReference type="GO" id="GO:0022625">
    <property type="term" value="C:cytosolic large ribosomal subunit"/>
    <property type="evidence" value="ECO:0007669"/>
    <property type="project" value="TreeGrafter"/>
</dbReference>
<dbReference type="GO" id="GO:0003735">
    <property type="term" value="F:structural constituent of ribosome"/>
    <property type="evidence" value="ECO:0007669"/>
    <property type="project" value="InterPro"/>
</dbReference>
<dbReference type="GO" id="GO:0006412">
    <property type="term" value="P:translation"/>
    <property type="evidence" value="ECO:0007669"/>
    <property type="project" value="UniProtKB-UniRule"/>
</dbReference>
<dbReference type="FunFam" id="3.90.1030.10:FF:000001">
    <property type="entry name" value="50S ribosomal protein L17"/>
    <property type="match status" value="1"/>
</dbReference>
<dbReference type="Gene3D" id="3.90.1030.10">
    <property type="entry name" value="Ribosomal protein L17"/>
    <property type="match status" value="1"/>
</dbReference>
<dbReference type="HAMAP" id="MF_01368">
    <property type="entry name" value="Ribosomal_bL17"/>
    <property type="match status" value="1"/>
</dbReference>
<dbReference type="InterPro" id="IPR000456">
    <property type="entry name" value="Ribosomal_bL17"/>
</dbReference>
<dbReference type="InterPro" id="IPR047859">
    <property type="entry name" value="Ribosomal_bL17_CS"/>
</dbReference>
<dbReference type="InterPro" id="IPR036373">
    <property type="entry name" value="Ribosomal_bL17_sf"/>
</dbReference>
<dbReference type="NCBIfam" id="TIGR00059">
    <property type="entry name" value="L17"/>
    <property type="match status" value="1"/>
</dbReference>
<dbReference type="PANTHER" id="PTHR14413:SF16">
    <property type="entry name" value="LARGE RIBOSOMAL SUBUNIT PROTEIN BL17M"/>
    <property type="match status" value="1"/>
</dbReference>
<dbReference type="PANTHER" id="PTHR14413">
    <property type="entry name" value="RIBOSOMAL PROTEIN L17"/>
    <property type="match status" value="1"/>
</dbReference>
<dbReference type="Pfam" id="PF01196">
    <property type="entry name" value="Ribosomal_L17"/>
    <property type="match status" value="1"/>
</dbReference>
<dbReference type="SUPFAM" id="SSF64263">
    <property type="entry name" value="Prokaryotic ribosomal protein L17"/>
    <property type="match status" value="1"/>
</dbReference>
<dbReference type="PROSITE" id="PS01167">
    <property type="entry name" value="RIBOSOMAL_L17"/>
    <property type="match status" value="1"/>
</dbReference>
<keyword id="KW-1185">Reference proteome</keyword>
<keyword id="KW-0687">Ribonucleoprotein</keyword>
<keyword id="KW-0689">Ribosomal protein</keyword>
<organism>
    <name type="scientific">Shigella flexneri</name>
    <dbReference type="NCBI Taxonomy" id="623"/>
    <lineage>
        <taxon>Bacteria</taxon>
        <taxon>Pseudomonadati</taxon>
        <taxon>Pseudomonadota</taxon>
        <taxon>Gammaproteobacteria</taxon>
        <taxon>Enterobacterales</taxon>
        <taxon>Enterobacteriaceae</taxon>
        <taxon>Shigella</taxon>
    </lineage>
</organism>
<accession>P0AG47</accession>
<accession>P02416</accession>
<comment type="subunit">
    <text evidence="1">Part of the 50S ribosomal subunit. Contacts protein L32.</text>
</comment>
<comment type="similarity">
    <text evidence="1">Belongs to the bacterial ribosomal protein bL17 family.</text>
</comment>
<evidence type="ECO:0000255" key="1">
    <source>
        <dbReference type="HAMAP-Rule" id="MF_01368"/>
    </source>
</evidence>
<evidence type="ECO:0000305" key="2"/>
<gene>
    <name evidence="1" type="primary">rplQ</name>
    <name type="ordered locus">SF3326</name>
    <name type="ordered locus">S4436</name>
</gene>
<proteinExistence type="inferred from homology"/>
<reference key="1">
    <citation type="journal article" date="2002" name="Nucleic Acids Res.">
        <title>Genome sequence of Shigella flexneri 2a: insights into pathogenicity through comparison with genomes of Escherichia coli K12 and O157.</title>
        <authorList>
            <person name="Jin Q."/>
            <person name="Yuan Z."/>
            <person name="Xu J."/>
            <person name="Wang Y."/>
            <person name="Shen Y."/>
            <person name="Lu W."/>
            <person name="Wang J."/>
            <person name="Liu H."/>
            <person name="Yang J."/>
            <person name="Yang F."/>
            <person name="Zhang X."/>
            <person name="Zhang J."/>
            <person name="Yang G."/>
            <person name="Wu H."/>
            <person name="Qu D."/>
            <person name="Dong J."/>
            <person name="Sun L."/>
            <person name="Xue Y."/>
            <person name="Zhao A."/>
            <person name="Gao Y."/>
            <person name="Zhu J."/>
            <person name="Kan B."/>
            <person name="Ding K."/>
            <person name="Chen S."/>
            <person name="Cheng H."/>
            <person name="Yao Z."/>
            <person name="He B."/>
            <person name="Chen R."/>
            <person name="Ma D."/>
            <person name="Qiang B."/>
            <person name="Wen Y."/>
            <person name="Hou Y."/>
            <person name="Yu J."/>
        </authorList>
    </citation>
    <scope>NUCLEOTIDE SEQUENCE [LARGE SCALE GENOMIC DNA]</scope>
    <source>
        <strain>301 / Serotype 2a</strain>
    </source>
</reference>
<reference key="2">
    <citation type="journal article" date="2003" name="Infect. Immun.">
        <title>Complete genome sequence and comparative genomics of Shigella flexneri serotype 2a strain 2457T.</title>
        <authorList>
            <person name="Wei J."/>
            <person name="Goldberg M.B."/>
            <person name="Burland V."/>
            <person name="Venkatesan M.M."/>
            <person name="Deng W."/>
            <person name="Fournier G."/>
            <person name="Mayhew G.F."/>
            <person name="Plunkett G. III"/>
            <person name="Rose D.J."/>
            <person name="Darling A."/>
            <person name="Mau B."/>
            <person name="Perna N.T."/>
            <person name="Payne S.M."/>
            <person name="Runyen-Janecky L.J."/>
            <person name="Zhou S."/>
            <person name="Schwartz D.C."/>
            <person name="Blattner F.R."/>
        </authorList>
    </citation>
    <scope>NUCLEOTIDE SEQUENCE [LARGE SCALE GENOMIC DNA]</scope>
    <source>
        <strain>ATCC 700930 / 2457T / Serotype 2a</strain>
    </source>
</reference>
<feature type="chain" id="PRO_0000175542" description="Large ribosomal subunit protein bL17">
    <location>
        <begin position="1"/>
        <end position="127"/>
    </location>
</feature>
<protein>
    <recommendedName>
        <fullName evidence="1">Large ribosomal subunit protein bL17</fullName>
    </recommendedName>
    <alternativeName>
        <fullName evidence="2">50S ribosomal protein L17</fullName>
    </alternativeName>
</protein>